<feature type="chain" id="PRO_0000377966" description="Uncharacterized protein 034R">
    <location>
        <begin position="1"/>
        <end position="134"/>
    </location>
</feature>
<feature type="transmembrane region" description="Helical" evidence="1">
    <location>
        <begin position="4"/>
        <end position="24"/>
    </location>
</feature>
<organism>
    <name type="scientific">Invertebrate iridescent virus 6</name>
    <name type="common">IIV-6</name>
    <name type="synonym">Chilo iridescent virus</name>
    <dbReference type="NCBI Taxonomy" id="176652"/>
    <lineage>
        <taxon>Viruses</taxon>
        <taxon>Varidnaviria</taxon>
        <taxon>Bamfordvirae</taxon>
        <taxon>Nucleocytoviricota</taxon>
        <taxon>Megaviricetes</taxon>
        <taxon>Pimascovirales</taxon>
        <taxon>Iridoviridae</taxon>
        <taxon>Betairidovirinae</taxon>
        <taxon>Iridovirus</taxon>
    </lineage>
</organism>
<organismHost>
    <name type="scientific">Acheta domesticus</name>
    <name type="common">House cricket</name>
    <dbReference type="NCBI Taxonomy" id="6997"/>
</organismHost>
<organismHost>
    <name type="scientific">Chilo suppressalis</name>
    <name type="common">Asiatic rice borer moth</name>
    <dbReference type="NCBI Taxonomy" id="168631"/>
</organismHost>
<organismHost>
    <name type="scientific">Gryllus bimaculatus</name>
    <name type="common">Two-spotted cricket</name>
    <dbReference type="NCBI Taxonomy" id="6999"/>
</organismHost>
<organismHost>
    <name type="scientific">Gryllus campestris</name>
    <dbReference type="NCBI Taxonomy" id="58607"/>
</organismHost>
<organismHost>
    <name type="scientific">Spodoptera frugiperda</name>
    <name type="common">Fall armyworm</name>
    <dbReference type="NCBI Taxonomy" id="7108"/>
</organismHost>
<sequence>MKQNLLILLSLLLVVVAIMWWLYEKKKEVPLPPPTPPTPPTPTGVPFLPMYAGLSSPVQYNPADYLYGWEKYPHGPAWSFGDRVPYAEAKNALGGHFGGGLYSPRDPILESKLGGVYIGNDLYTVGGVGGDGHW</sequence>
<proteinExistence type="predicted"/>
<comment type="subcellular location">
    <subcellularLocation>
        <location evidence="2">Membrane</location>
        <topology evidence="2">Single-pass membrane protein</topology>
    </subcellularLocation>
</comment>
<reference key="1">
    <citation type="journal article" date="2001" name="Virology">
        <title>Analysis of the first complete DNA sequence of an invertebrate iridovirus: coding strategy of the genome of Chilo iridescent virus.</title>
        <authorList>
            <person name="Jakob N.J."/>
            <person name="Mueller K."/>
            <person name="Bahr U."/>
            <person name="Darai G."/>
        </authorList>
    </citation>
    <scope>NUCLEOTIDE SEQUENCE [LARGE SCALE GENOMIC DNA]</scope>
</reference>
<reference key="2">
    <citation type="journal article" date="2007" name="Virol. J.">
        <title>Comparative genomic analysis of the family Iridoviridae: re-annotating and defining the core set of iridovirus genes.</title>
        <authorList>
            <person name="Eaton H.E."/>
            <person name="Metcalf J."/>
            <person name="Penny E."/>
            <person name="Tcherepanov V."/>
            <person name="Upton C."/>
            <person name="Brunetti C.R."/>
        </authorList>
    </citation>
    <scope>GENOME REANNOTATION</scope>
</reference>
<evidence type="ECO:0000255" key="1"/>
<evidence type="ECO:0000305" key="2"/>
<accession>Q91G63</accession>
<gene>
    <name type="ORF">IIV6-034R</name>
</gene>
<protein>
    <recommendedName>
        <fullName>Uncharacterized protein 034R</fullName>
    </recommendedName>
</protein>
<name>034R_IIV6</name>
<keyword id="KW-0472">Membrane</keyword>
<keyword id="KW-1185">Reference proteome</keyword>
<keyword id="KW-0812">Transmembrane</keyword>
<keyword id="KW-1133">Transmembrane helix</keyword>
<dbReference type="EMBL" id="AF303741">
    <property type="protein sequence ID" value="AAK81969.1"/>
    <property type="molecule type" value="Genomic_DNA"/>
</dbReference>
<dbReference type="RefSeq" id="NP_149497.1">
    <property type="nucleotide sequence ID" value="NC_003038.1"/>
</dbReference>
<dbReference type="SMR" id="Q91G63"/>
<dbReference type="KEGG" id="vg:1733059"/>
<dbReference type="OrthoDB" id="36109at10239"/>
<dbReference type="Proteomes" id="UP000001359">
    <property type="component" value="Genome"/>
</dbReference>
<dbReference type="GO" id="GO:0016020">
    <property type="term" value="C:membrane"/>
    <property type="evidence" value="ECO:0007669"/>
    <property type="project" value="UniProtKB-SubCell"/>
</dbReference>